<gene>
    <name evidence="1" type="primary">slyX</name>
    <name type="ordered locus">Sputcn32_3012</name>
</gene>
<comment type="similarity">
    <text evidence="1">Belongs to the SlyX family.</text>
</comment>
<proteinExistence type="inferred from homology"/>
<reference key="1">
    <citation type="submission" date="2007-04" db="EMBL/GenBank/DDBJ databases">
        <title>Complete sequence of Shewanella putrefaciens CN-32.</title>
        <authorList>
            <consortium name="US DOE Joint Genome Institute"/>
            <person name="Copeland A."/>
            <person name="Lucas S."/>
            <person name="Lapidus A."/>
            <person name="Barry K."/>
            <person name="Detter J.C."/>
            <person name="Glavina del Rio T."/>
            <person name="Hammon N."/>
            <person name="Israni S."/>
            <person name="Dalin E."/>
            <person name="Tice H."/>
            <person name="Pitluck S."/>
            <person name="Chain P."/>
            <person name="Malfatti S."/>
            <person name="Shin M."/>
            <person name="Vergez L."/>
            <person name="Schmutz J."/>
            <person name="Larimer F."/>
            <person name="Land M."/>
            <person name="Hauser L."/>
            <person name="Kyrpides N."/>
            <person name="Mikhailova N."/>
            <person name="Romine M.F."/>
            <person name="Fredrickson J."/>
            <person name="Tiedje J."/>
            <person name="Richardson P."/>
        </authorList>
    </citation>
    <scope>NUCLEOTIDE SEQUENCE [LARGE SCALE GENOMIC DNA]</scope>
    <source>
        <strain>CN-32 / ATCC BAA-453</strain>
    </source>
</reference>
<evidence type="ECO:0000255" key="1">
    <source>
        <dbReference type="HAMAP-Rule" id="MF_00715"/>
    </source>
</evidence>
<protein>
    <recommendedName>
        <fullName evidence="1">Protein SlyX homolog</fullName>
    </recommendedName>
</protein>
<feature type="chain" id="PRO_1000045737" description="Protein SlyX homolog">
    <location>
        <begin position="1"/>
        <end position="70"/>
    </location>
</feature>
<organism>
    <name type="scientific">Shewanella putrefaciens (strain CN-32 / ATCC BAA-453)</name>
    <dbReference type="NCBI Taxonomy" id="319224"/>
    <lineage>
        <taxon>Bacteria</taxon>
        <taxon>Pseudomonadati</taxon>
        <taxon>Pseudomonadota</taxon>
        <taxon>Gammaproteobacteria</taxon>
        <taxon>Alteromonadales</taxon>
        <taxon>Shewanellaceae</taxon>
        <taxon>Shewanella</taxon>
    </lineage>
</organism>
<dbReference type="EMBL" id="CP000681">
    <property type="protein sequence ID" value="ABP76725.1"/>
    <property type="molecule type" value="Genomic_DNA"/>
</dbReference>
<dbReference type="SMR" id="A4Y9U2"/>
<dbReference type="STRING" id="319224.Sputcn32_3012"/>
<dbReference type="KEGG" id="spc:Sputcn32_3012"/>
<dbReference type="eggNOG" id="COG2900">
    <property type="taxonomic scope" value="Bacteria"/>
</dbReference>
<dbReference type="HOGENOM" id="CLU_180796_4_2_6"/>
<dbReference type="HAMAP" id="MF_00715">
    <property type="entry name" value="SlyX"/>
    <property type="match status" value="1"/>
</dbReference>
<dbReference type="InterPro" id="IPR007236">
    <property type="entry name" value="SlyX"/>
</dbReference>
<dbReference type="PANTHER" id="PTHR36508">
    <property type="entry name" value="PROTEIN SLYX"/>
    <property type="match status" value="1"/>
</dbReference>
<dbReference type="PANTHER" id="PTHR36508:SF1">
    <property type="entry name" value="PROTEIN SLYX"/>
    <property type="match status" value="1"/>
</dbReference>
<dbReference type="Pfam" id="PF04102">
    <property type="entry name" value="SlyX"/>
    <property type="match status" value="1"/>
</dbReference>
<accession>A4Y9U2</accession>
<sequence>MQGVQEQIEELQTKLAFQELTVEELNQEVIKLNRLVAYQQHQIQLLVGKLQAMEPSNIATQAEETPPPHY</sequence>
<name>SLYX_SHEPC</name>